<gene>
    <name evidence="23" type="primary">Dag1</name>
</gene>
<reference key="1">
    <citation type="journal article" date="1997" name="Hum. Mol. Genet.">
        <title>Dystroglycan is essential for early embryonic development: disruption of Reichert's membrane in Dag1-null mice.</title>
        <authorList>
            <person name="Williamson R.A."/>
            <person name="Henry M.D."/>
            <person name="Daniels K.J."/>
            <person name="Hrstka R.F."/>
            <person name="Lee J.C."/>
            <person name="Sunada Y."/>
            <person name="Ibraghimov-Beskrovnaya O."/>
            <person name="Campbell K.P."/>
        </authorList>
    </citation>
    <scope>NUCLEOTIDE SEQUENCE [GENOMIC DNA]</scope>
    <scope>DISRUPTION PHENOTYPE</scope>
    <scope>FUNCTION</scope>
    <scope>TISSUE SPECIFICITY</scope>
    <source>
        <strain>129/SvJ</strain>
    </source>
</reference>
<reference key="2">
    <citation type="journal article" date="2004" name="Genome Res.">
        <title>The status, quality, and expansion of the NIH full-length cDNA project: the Mammalian Gene Collection (MGC).</title>
        <authorList>
            <consortium name="The MGC Project Team"/>
        </authorList>
    </citation>
    <scope>NUCLEOTIDE SEQUENCE [LARGE SCALE MRNA]</scope>
    <source>
        <strain>C57BL/6J</strain>
        <tissue>Mammary gland</tissue>
    </source>
</reference>
<reference key="3">
    <citation type="journal article" date="1995" name="Matrix Biol.">
        <title>Cloning and sequencing of mouse skeletal muscle alpha-dystroglycan.</title>
        <authorList>
            <person name="Brancaccio A."/>
            <person name="Ruegg M.A."/>
            <person name="Engel J."/>
        </authorList>
    </citation>
    <scope>NUCLEOTIDE SEQUENCE [MRNA] OF 1-650</scope>
    <source>
        <tissue>Skeletal muscle</tissue>
    </source>
</reference>
<reference key="4">
    <citation type="submission" date="1998-02" db="EMBL/GenBank/DDBJ databases">
        <authorList>
            <person name="Brancaccio A."/>
        </authorList>
    </citation>
    <scope>SEQUENCE REVISION TO 142-143</scope>
</reference>
<reference key="5">
    <citation type="journal article" date="1994" name="Hum. Mol. Genet.">
        <title>Dystroglycan: brain localisation and chromosome mapping in the mouse.</title>
        <authorList>
            <person name="Gorecki D.C."/>
            <person name="Derry J.M.J."/>
            <person name="Barnard E.A."/>
        </authorList>
    </citation>
    <scope>NUCLEOTIDE SEQUENCE [MRNA] OF 352-650</scope>
    <scope>TISSUE SPECIFICITY</scope>
    <source>
        <strain>C57BL/10</strain>
        <tissue>Skeletal muscle</tissue>
    </source>
</reference>
<reference key="6">
    <citation type="journal article" date="1996" name="Hum. Mol. Genet.">
        <title>Cloning and expression analyses of mouse dystroglycan gene: specific expression in maternal decidua at the peri-implantation stage.</title>
        <authorList>
            <person name="Yotsumoto S."/>
            <person name="Fujiwara H."/>
            <person name="Horton J.H."/>
            <person name="Mosby T.A."/>
            <person name="Wang X."/>
            <person name="Cui Y."/>
            <person name="Ko M.S.H."/>
        </authorList>
    </citation>
    <scope>NUCLEOTIDE SEQUENCE [MRNA] OF 620-893</scope>
    <source>
        <strain>C57BL/6J</strain>
        <tissue>Decidua</tissue>
    </source>
</reference>
<reference key="7">
    <citation type="journal article" date="1998" name="Ann. N. Y. Acad. Sci.">
        <title>A single disulfide bridge (Cys182-Cys264) is crucial for alpha-dystroglycan N-terminal domain stability.</title>
        <authorList>
            <person name="Brancaccio A."/>
            <person name="Jeno P."/>
            <person name="Engel J."/>
        </authorList>
    </citation>
    <scope>DISULFIDE BOND</scope>
</reference>
<reference key="8">
    <citation type="journal article" date="1998" name="J. Cell Biol.">
        <title>Molecular organization of sarcoglycan complex in mouse myotubes in culture.</title>
        <authorList>
            <person name="Chan Y.-M."/>
            <person name="Boennemann C.G."/>
            <person name="Lidov H.G.W."/>
            <person name="Kunkel L.M."/>
        </authorList>
    </citation>
    <scope>INTERACTION WITH SGCD</scope>
</reference>
<reference key="9">
    <citation type="journal article" date="2001" name="Cell. Signal.">
        <title>The interaction of dystrophin with beta-dystroglycan is regulated by tyrosine phosphorylation.</title>
        <authorList>
            <person name="Ilsley J.L."/>
            <person name="Sudol M."/>
            <person name="Winder S.J."/>
        </authorList>
    </citation>
    <scope>PHOSPHORYLATION</scope>
    <scope>INTERACTION WITH DMD</scope>
</reference>
<reference key="10">
    <citation type="journal article" date="2001" name="Neuron">
        <title>Specific disruption of a Schwann cell dystrophin-related protein complex in a demyelinating neuropathy.</title>
        <authorList>
            <person name="Sherman D.L."/>
            <person name="Fabrizi C."/>
            <person name="Gillespie C.S."/>
            <person name="Brophy P.J."/>
        </authorList>
    </citation>
    <scope>IDENTIFICATION IN A COMPLEX WITH DRP2; PRX; DMD AND UTRN</scope>
    <scope>TISSUE SPECIFICITY</scope>
</reference>
<reference key="11">
    <citation type="journal article" date="2003" name="Brain Res. Mol. Brain Res.">
        <title>Expression of dystroglycan, fukutin and POMGnT1 during mouse cerebellar development.</title>
        <authorList>
            <person name="Henion T.R."/>
            <person name="Qu Q."/>
            <person name="Smith F.I."/>
        </authorList>
    </citation>
    <scope>DEVELOPMENTAL STAGE</scope>
</reference>
<reference key="12">
    <citation type="journal article" date="2003" name="J. Neurosci.">
        <title>Expression of laminin receptors in schwann cell differentiation: evidence for distinct roles.</title>
        <authorList>
            <person name="Previtali S.C."/>
            <person name="Nodari A."/>
            <person name="Taveggia C."/>
            <person name="Pardini C."/>
            <person name="Dina G."/>
            <person name="Villa A."/>
            <person name="Wrabetz L."/>
            <person name="Quattrini A."/>
            <person name="Feltri M.L."/>
        </authorList>
    </citation>
    <scope>DEVELOPMENTAL STAGE</scope>
    <scope>TISSUE SPECIFICITY</scope>
    <scope>FUNCTION</scope>
</reference>
<reference key="13">
    <citation type="journal article" date="2003" name="Neuron">
        <title>Unique role of dystroglycan in peripheral nerve myelination, nodal structure, and sodium channel stabilization.</title>
        <authorList>
            <person name="Saito F."/>
            <person name="Moore S.A."/>
            <person name="Barresi R."/>
            <person name="Henry M.D."/>
            <person name="Messing A."/>
            <person name="Ross-Barta S.E."/>
            <person name="Cohn R.D."/>
            <person name="Williamson R.A."/>
            <person name="Sluka K.A."/>
            <person name="Sherman D.L."/>
            <person name="Brophy P.J."/>
            <person name="Schmelzer J.D."/>
            <person name="Low P.A."/>
            <person name="Wrabetz L."/>
            <person name="Feltri M.L."/>
            <person name="Campbell K.P."/>
        </authorList>
    </citation>
    <scope>FUNCTION</scope>
    <scope>DISRUPTION PHENOTYPE</scope>
    <scope>DEVELOPMENTAL STAGE</scope>
    <scope>LIGAND-BINDING</scope>
</reference>
<reference key="14">
    <citation type="journal article" date="2006" name="FEBS Lett.">
        <title>Brain alpha-dystroglycan displays unique glycoepitopes and preferential binding to laminin-10/11.</title>
        <authorList>
            <person name="McDearmon E.L."/>
            <person name="Combs A.C."/>
            <person name="Sekiguchi K."/>
            <person name="Fujiwara H."/>
            <person name="Ervasti J.M."/>
        </authorList>
    </citation>
    <scope>TISSUE SPECIFICITY</scope>
</reference>
<reference key="15">
    <citation type="journal article" date="2008" name="Cell">
        <title>An ankyrin-based mechanism for functional organization of dystrophin and dystroglycan.</title>
        <authorList>
            <person name="Ayalon G."/>
            <person name="Davis J.Q."/>
            <person name="Scotland P.B."/>
            <person name="Bennett V."/>
        </authorList>
    </citation>
    <scope>INTERACTION WITH ANK3</scope>
    <scope>SUBCELLULAR LOCATION</scope>
    <scope>MUTAGENESIS OF 796-ILE--PHE-798; 800-ASP-GLU-801 AND 803-ASP-ASP-804</scope>
</reference>
<reference key="16">
    <citation type="journal article" date="2010" name="Cell">
        <title>A tissue-specific atlas of mouse protein phosphorylation and expression.</title>
        <authorList>
            <person name="Huttlin E.L."/>
            <person name="Jedrychowski M.P."/>
            <person name="Elias J.E."/>
            <person name="Goswami T."/>
            <person name="Rad R."/>
            <person name="Beausoleil S.A."/>
            <person name="Villen J."/>
            <person name="Haas W."/>
            <person name="Sowa M.E."/>
            <person name="Gygi S.P."/>
        </authorList>
    </citation>
    <scope>PHOSPHORYLATION [LARGE SCALE ANALYSIS] AT THR-788</scope>
    <scope>IDENTIFICATION BY MASS SPECTROMETRY [LARGE SCALE ANALYSIS]</scope>
    <source>
        <tissue>Brain</tissue>
        <tissue>Brown adipose tissue</tissue>
        <tissue>Heart</tissue>
        <tissue>Kidney</tissue>
        <tissue>Liver</tissue>
        <tissue>Lung</tissue>
        <tissue>Pancreas</tissue>
        <tissue>Spleen</tissue>
        <tissue>Testis</tissue>
    </source>
</reference>
<reference key="17">
    <citation type="journal article" date="2015" name="FASEB J.">
        <title>FE65 and FE65L1 amyloid precursor protein-binding protein compound null mice display adult-onset cataract and muscle weakness.</title>
        <authorList>
            <person name="Suh J."/>
            <person name="Moncaster J.A."/>
            <person name="Wang L."/>
            <person name="Hafeez I."/>
            <person name="Herz J."/>
            <person name="Tanzi R.E."/>
            <person name="Goldstein L.E."/>
            <person name="Guenette S.Y."/>
        </authorList>
    </citation>
    <scope>TISSUE SPECIFICITY</scope>
</reference>
<reference key="18">
    <citation type="journal article" date="2010" name="Science">
        <title>O-mannosyl phosphorylation of alpha-dystroglycan is required for laminin binding.</title>
        <authorList>
            <person name="Yoshida-Moriguchi T."/>
            <person name="Yu L."/>
            <person name="Stalnaker S.H."/>
            <person name="Davis S."/>
            <person name="Kunz S."/>
            <person name="Madson M."/>
            <person name="Oldstone M.B."/>
            <person name="Schachter H."/>
            <person name="Wells L."/>
            <person name="Campbell K.P."/>
        </authorList>
    </citation>
    <scope>STRUCTURE OF CARBOHYDRATES</scope>
    <scope>LIGAND-BINDING</scope>
    <scope>ADENOVIRUS BINDING</scope>
    <scope>IDENTIFICATION BY MASS SPECTROMETRY</scope>
</reference>
<reference key="19">
    <citation type="journal article" date="2004" name="J. Biol. Chem.">
        <title>The structure of the N-terminal region of murine skeletal muscle alpha-dystroglycan discloses a modular architecture.</title>
        <authorList>
            <person name="Bozic D."/>
            <person name="Sciandra F."/>
            <person name="Lamba D."/>
            <person name="Brancaccio A."/>
        </authorList>
    </citation>
    <scope>X-RAY CRYSTALLOGRAPHY (2.3 ANGSTROMS) OF 58-303 IN COMPLEX WITH LIGAND</scope>
    <scope>DISULFIDE BOND</scope>
</reference>
<proteinExistence type="evidence at protein level"/>
<keyword id="KW-0002">3D-structure</keyword>
<keyword id="KW-1003">Cell membrane</keyword>
<keyword id="KW-0963">Cytoplasm</keyword>
<keyword id="KW-0206">Cytoskeleton</keyword>
<keyword id="KW-1015">Disulfide bond</keyword>
<keyword id="KW-0325">Glycoprotein</keyword>
<keyword id="KW-0945">Host-virus interaction</keyword>
<keyword id="KW-0472">Membrane</keyword>
<keyword id="KW-0539">Nucleus</keyword>
<keyword id="KW-0597">Phosphoprotein</keyword>
<keyword id="KW-0628">Postsynaptic cell membrane</keyword>
<keyword id="KW-1185">Reference proteome</keyword>
<keyword id="KW-0964">Secreted</keyword>
<keyword id="KW-0732">Signal</keyword>
<keyword id="KW-0770">Synapse</keyword>
<keyword id="KW-0812">Transmembrane</keyword>
<keyword id="KW-1133">Transmembrane helix</keyword>
<accession>Q62165</accession>
<accession>Q61094</accession>
<accession>Q61141</accession>
<accession>Q61497</accession>
<feature type="signal peptide" evidence="5">
    <location>
        <begin position="1"/>
        <end position="27"/>
    </location>
</feature>
<feature type="chain" id="PRO_0000021067" description="Alpha-dystroglycan">
    <location>
        <begin position="28"/>
        <end position="651"/>
    </location>
</feature>
<feature type="chain" id="PRO_0000021068" description="Beta-dystroglycan">
    <location>
        <begin position="652"/>
        <end position="893"/>
    </location>
</feature>
<feature type="topological domain" description="Extracellular" evidence="5">
    <location>
        <begin position="652"/>
        <end position="751"/>
    </location>
</feature>
<feature type="transmembrane region" description="Helical" evidence="5">
    <location>
        <begin position="752"/>
        <end position="772"/>
    </location>
</feature>
<feature type="topological domain" description="Cytoplasmic" evidence="5">
    <location>
        <begin position="773"/>
        <end position="893"/>
    </location>
</feature>
<feature type="domain" description="Peptidase S72">
    <location>
        <begin position="601"/>
        <end position="710"/>
    </location>
</feature>
<feature type="region of interest" description="Required for laminin recognition" evidence="1">
    <location>
        <begin position="28"/>
        <end position="406"/>
    </location>
</feature>
<feature type="region of interest" description="O-glycosylated at one site" evidence="1">
    <location>
        <begin position="47"/>
        <end position="69"/>
    </location>
</feature>
<feature type="region of interest" description="Mucin-like domain" evidence="1">
    <location>
        <begin position="314"/>
        <end position="483"/>
    </location>
</feature>
<feature type="region of interest" description="Disordered" evidence="6">
    <location>
        <begin position="379"/>
        <end position="498"/>
    </location>
</feature>
<feature type="region of interest" description="O-glycosylated at seven sites with GalNAc" evidence="1">
    <location>
        <begin position="461"/>
        <end position="483"/>
    </location>
</feature>
<feature type="region of interest" description="Disordered" evidence="6">
    <location>
        <begin position="722"/>
        <end position="744"/>
    </location>
</feature>
<feature type="region of interest" description="Required for interaction with CAV3" evidence="1">
    <location>
        <begin position="817"/>
        <end position="893"/>
    </location>
</feature>
<feature type="region of interest" description="Disordered" evidence="6">
    <location>
        <begin position="821"/>
        <end position="893"/>
    </location>
</feature>
<feature type="region of interest" description="Required for binding DMD and UTRN" evidence="1">
    <location>
        <begin position="878"/>
        <end position="893"/>
    </location>
</feature>
<feature type="short sequence motif" description="Nuclear localization signal" evidence="1">
    <location>
        <begin position="774"/>
        <end position="780"/>
    </location>
</feature>
<feature type="short sequence motif" description="PPXY motif" evidence="1">
    <location>
        <begin position="887"/>
        <end position="890"/>
    </location>
</feature>
<feature type="compositionally biased region" description="Low complexity" evidence="6">
    <location>
        <begin position="409"/>
        <end position="445"/>
    </location>
</feature>
<feature type="compositionally biased region" description="Basic and acidic residues" evidence="6">
    <location>
        <begin position="734"/>
        <end position="744"/>
    </location>
</feature>
<feature type="compositionally biased region" description="Polar residues" evidence="6">
    <location>
        <begin position="830"/>
        <end position="844"/>
    </location>
</feature>
<feature type="compositionally biased region" description="Pro residues" evidence="6">
    <location>
        <begin position="857"/>
        <end position="868"/>
    </location>
</feature>
<feature type="site" description="Cleavage; by autolysis" evidence="1">
    <location>
        <begin position="651"/>
        <end position="652"/>
    </location>
</feature>
<feature type="site" description="Cleavage; by MMP9" evidence="1">
    <location>
        <begin position="713"/>
        <end position="714"/>
    </location>
</feature>
<feature type="modified residue" description="Phosphothreonine" evidence="28">
    <location>
        <position position="788"/>
    </location>
</feature>
<feature type="modified residue" description="Phosphotyrosine; by SRC" evidence="3">
    <location>
        <position position="890"/>
    </location>
</feature>
<feature type="glycosylation site" description="N-linked (GlcNAc...) asparagine" evidence="5">
    <location>
        <position position="139"/>
    </location>
</feature>
<feature type="glycosylation site" description="O-linked (Man6P...) threonine" evidence="3">
    <location>
        <position position="315"/>
    </location>
</feature>
<feature type="glycosylation site" description="O-linked (Man6P...) threonine" evidence="3">
    <location>
        <position position="317"/>
    </location>
</feature>
<feature type="glycosylation site" description="O-linked (Man6P...) threonine" evidence="1">
    <location>
        <position position="377"/>
    </location>
</feature>
<feature type="glycosylation site" description="N-linked (GlcNAc...) asparagine" evidence="5">
    <location>
        <position position="639"/>
    </location>
</feature>
<feature type="glycosylation site" description="N-linked (GlcNAc...) asparagine" evidence="5">
    <location>
        <position position="647"/>
    </location>
</feature>
<feature type="glycosylation site" description="N-linked (GlcNAc...) asparagine" evidence="5">
    <location>
        <position position="659"/>
    </location>
</feature>
<feature type="disulfide bond" evidence="12 20 24 25 26 27">
    <location>
        <begin position="180"/>
        <end position="262"/>
    </location>
</feature>
<feature type="disulfide bond" evidence="3">
    <location>
        <begin position="667"/>
        <end position="711"/>
    </location>
</feature>
<feature type="mutagenesis site" description="Complete loss of ANK3-binding." evidence="14">
    <original>IIF</original>
    <variation>AAA</variation>
    <location>
        <begin position="796"/>
        <end position="798"/>
    </location>
</feature>
<feature type="mutagenesis site" description="Complete loss of ANK3-binding." evidence="14">
    <original>DE</original>
    <variation>AA</variation>
    <location>
        <begin position="800"/>
        <end position="801"/>
    </location>
</feature>
<feature type="mutagenesis site" description="Major reduction in ANK3-binding." evidence="14">
    <original>DD</original>
    <variation>AA</variation>
    <location>
        <begin position="803"/>
        <end position="804"/>
    </location>
</feature>
<feature type="sequence conflict" description="In Ref. 5; CAA84293." evidence="22" ref="5">
    <original>TKK</original>
    <variation>SKE</variation>
    <location>
        <begin position="448"/>
        <end position="450"/>
    </location>
</feature>
<feature type="sequence conflict" description="In Ref. 5; CAA84293." evidence="22" ref="5">
    <original>GD</original>
    <variation>PH</variation>
    <location>
        <begin position="599"/>
        <end position="600"/>
    </location>
</feature>
<feature type="sequence conflict" description="In Ref. 3; CAA60031 and 5; AAC52853." evidence="22" ref="3 5">
    <original>I</original>
    <variation>V</variation>
    <location>
        <position position="643"/>
    </location>
</feature>
<feature type="strand" evidence="29">
    <location>
        <begin position="68"/>
        <end position="71"/>
    </location>
</feature>
<feature type="strand" evidence="29">
    <location>
        <begin position="76"/>
        <end position="79"/>
    </location>
</feature>
<feature type="helix" evidence="29">
    <location>
        <begin position="82"/>
        <end position="85"/>
    </location>
</feature>
<feature type="strand" evidence="29">
    <location>
        <begin position="91"/>
        <end position="96"/>
    </location>
</feature>
<feature type="strand" evidence="29">
    <location>
        <begin position="99"/>
        <end position="101"/>
    </location>
</feature>
<feature type="strand" evidence="29">
    <location>
        <begin position="106"/>
        <end position="109"/>
    </location>
</feature>
<feature type="turn" evidence="29">
    <location>
        <begin position="110"/>
        <end position="113"/>
    </location>
</feature>
<feature type="strand" evidence="29">
    <location>
        <begin position="114"/>
        <end position="117"/>
    </location>
</feature>
<feature type="helix" evidence="29">
    <location>
        <begin position="121"/>
        <end position="123"/>
    </location>
</feature>
<feature type="strand" evidence="29">
    <location>
        <begin position="125"/>
        <end position="136"/>
    </location>
</feature>
<feature type="strand" evidence="29">
    <location>
        <begin position="142"/>
        <end position="156"/>
    </location>
</feature>
<feature type="strand" evidence="29">
    <location>
        <begin position="186"/>
        <end position="194"/>
    </location>
</feature>
<feature type="helix" evidence="29">
    <location>
        <begin position="197"/>
        <end position="199"/>
    </location>
</feature>
<feature type="helix" evidence="29">
    <location>
        <begin position="202"/>
        <end position="216"/>
    </location>
</feature>
<feature type="helix" evidence="29">
    <location>
        <begin position="220"/>
        <end position="222"/>
    </location>
</feature>
<feature type="strand" evidence="29">
    <location>
        <begin position="224"/>
        <end position="227"/>
    </location>
</feature>
<feature type="strand" evidence="29">
    <location>
        <begin position="239"/>
        <end position="243"/>
    </location>
</feature>
<feature type="strand" evidence="29">
    <location>
        <begin position="254"/>
        <end position="263"/>
    </location>
</feature>
<feature type="turn" evidence="29">
    <location>
        <begin position="266"/>
        <end position="268"/>
    </location>
</feature>
<feature type="helix" evidence="29">
    <location>
        <begin position="273"/>
        <end position="281"/>
    </location>
</feature>
<feature type="helix" evidence="29">
    <location>
        <begin position="283"/>
        <end position="288"/>
    </location>
</feature>
<feature type="strand" evidence="29">
    <location>
        <begin position="292"/>
        <end position="300"/>
    </location>
</feature>
<comment type="function">
    <text>The dystroglycan complex is involved in a number of processes including laminin and basement membrane assembly, sarcolemmal stability, cell survival, peripheral nerve myelination, nodal structure, cell migration, and epithelial polarization.</text>
</comment>
<comment type="function">
    <molecule>Alpha-dystroglycan</molecule>
    <text evidence="2">Extracellular peripheral glycoprotein that acts as a receptor for extracellular matrix proteins containing laminin-G domains, and for certain adenoviruses. Receptor for laminin-2 (LAMA2) and agrin in peripheral nerve Schwann cells. Also acts as a receptor for laminin LAMA5 (By similarity).</text>
</comment>
<comment type="function">
    <molecule>Beta-dystroglycan</molecule>
    <text evidence="1 10 11 18">Transmembrane protein that plays important roles in connecting the extracellular matrix to the cytoskeleton. Acts as a cell adhesion receptor in both muscle and non-muscle tissues. Receptor for both DMD and UTRN and, through these interactions, scaffolds axin to the cytoskeleton. Also functions in cell adhesion-mediated signaling and implicated in cell polarity (By similarity).</text>
</comment>
<comment type="subunit">
    <text evidence="3 4 7 8 12 14 19">Monomer. Heterodimer of alpha- and beta-dystroglycan subunits which are the central components of the dystrophin-glycoprotein complex. This complex then can form a dystrophin-associated glycoprotein complex (DGC) which is composed of three subcomplexes: a cytoplasmic complex comprised of DMD (or UTRN), DTNA and a number of syntrophins, such as SNTB1, SNTB2, SNTG1 and SNTG2, the transmembrane dystroglycan complex, and the sarcoglycan-sarcospan complex. Interacts (via the N-terminal of alphaDAG1) with LARGE1; the interaction enhances laminin binding (By similarity). Interacts with SGCD. Interacts with AGR2 and AGR3. Interacts (betaDAG1) with DMD; the interaction is inhibited by phosphorylation on the PPXY motif. Interacts (betaDAG1, via its PPXY motif) with UTRN (via its WWW and ZZ domains); the interaction is inhibited by phosphorylation on the PPXY motif. Interacts (betaDAG1, via its phosphorylated PPXY motif) with the SH2 domain-containing proteins, FYN, CSK, NCK and SHC. Interacts (betaDAG1) with CAV3 (via a central WW-like domain); the interaction disrupts the binding of DMD. BetaDAG1 directly interacts with ANK3, but not with ANK2; this interaction does not interfere with DMD-binding and is required for retention at costameres (By similarity). Identified in a dystroglycan complex that contains at least PRX, DRP2, UTRN, DMD and DAG1 (PubMed:11430802). Interacts with POMGNT1 (By similarity). BetaDAG1 interacts with CD93 (By similarity).</text>
</comment>
<comment type="interaction">
    <interactant intactId="EBI-2025154">
        <id>PRO_0000021067</id>
    </interactant>
    <interactant intactId="EBI-2025048">
        <id>Q4VBE4</id>
        <label>Egflam</label>
    </interactant>
    <organismsDiffer>false</organismsDiffer>
    <experiments>2</experiments>
</comment>
<comment type="subcellular location">
    <molecule>Alpha-dystroglycan</molecule>
    <subcellularLocation>
        <location evidence="1">Secreted</location>
        <location evidence="1">Extracellular space</location>
    </subcellularLocation>
</comment>
<comment type="subcellular location">
    <molecule>Beta-dystroglycan</molecule>
    <subcellularLocation>
        <location evidence="1">Cell membrane</location>
        <topology evidence="1">Single-pass type I membrane protein</topology>
    </subcellularLocation>
    <subcellularLocation>
        <location>Cytoplasm</location>
        <location>Cytoskeleton</location>
    </subcellularLocation>
    <subcellularLocation>
        <location>Nucleus</location>
        <location>Nucleoplasm</location>
    </subcellularLocation>
    <subcellularLocation>
        <location>Cell membrane</location>
        <location>Sarcolemma</location>
    </subcellularLocation>
    <subcellularLocation>
        <location>Postsynaptic cell membrane</location>
    </subcellularLocation>
    <text>The monomeric form translocates to the nucleus via the action of importins and depends on RAN. Nuclear transport is inhibited by Tyr-892 phosphorylation. In skeletal muscle, this phosphorylated form locates to a vesicular internal membrane compartment. In muscle cells, sarcolemma localization requires the presence of ANK2, while localization to costameres requires the presence of ANK3. Localizes to neuromuscular junctions (NMJs). In adult muscle, NMJ localization depends upon ANK2 presence, but not in newborn animals. In peripheral nerves, localizes to the Schwann cell membrane. Colocalizes with ERM proteins in Schwann-cell microvilli.</text>
</comment>
<comment type="tissue specificity">
    <text evidence="7 11 13 16 17 18">Detected in brain and kidney (at protein level) (PubMed:16709410). Detected in sciatic nerve (at protein level) (PubMed:11430802). Expressed in neurons and muscle cells (at protein level) (PubMed:25757569). Expressed in a variety of tissues. In brain, expressed in the hippocampal formation, the olfactory bulb, the cerebellum and the thalamus. In the peripheral nerve system, expressed in Schwann cells.</text>
</comment>
<comment type="developmental stage">
    <text evidence="9 10 11">Broadly expressed in late embryonic and early postnatal cerebellar neurons, including premigratory granule neurons of the external granule cell layer, but expression is largely down-regulated. Weak expression in Purkinje cells throughout development. Alpha- and beta-DG proteins are also present on the Bergmann glial scaffolds used by granule cells during early postnatal radial migration. In the peripheral nerve system, expression briefly precedes and parallels myelination. First expressed at 18.5 dpc in spinal roots, dorsal root ganglions and nerve trunks. At P1, at the onset of myelination, expressed in motor roots. At P5 and P15, expression progressively increases in sensory roots and peripheral nerves. Between postnatal 2 weeks and 18 months, localizes at the nodes of Ranvier as well as at the Schwann cell outer membrane.</text>
</comment>
<comment type="PTM">
    <molecule>Alpha-dystroglycan</molecule>
    <text evidence="2 3 15">O-glycosylated (PubMed:20044576). POMGNT1 catalyzes the initial addition of N-acetylglucosamine, giving rise to the GlcNAc(beta1-2)Man(alpha1-)O-Ser/Thr moiety and thus providing the necessary basis for the addition of further carbohydrate moieties. Heavily O-glycosylated comprising of up to two thirds of its mass and the carbohydrate composition differs depending on tissue type. Mucin-type O-glycosylation is important for ligand binding activity. O-mannosylation is found in high abundance in both brain and muscle where the most abundant glycan is Sia-alpha-2-3-Gal-beta-1-4-Glc-NAc-beta-1-2-Man. In muscle, glycosylation on Thr-315, Thr-317, Thr-379 by a phosphorylated O-mannosyl glycan with the structure 2-(N-acetylamido)-2-deoxygalactosyl-beta-1,3-2-(N-acetylamido)-2-deoxyglucosyl-beta-1,4-6-phosphomannose is mediated by like-acetylglucosaminyltransferase (LARGE1) protein amd is required for laminin binding. O-glycosylated in the N-terminal region with a core 1 or possibly core 8 glycan. The brain form displays a unique glycosylation pattern which is absent in other tissues; this form shows enhanced binding to laminin LAMA5 compared to the skeletal muscle form (By similarity).</text>
</comment>
<comment type="PTM">
    <molecule>Beta-dystroglycan</molecule>
    <text evidence="3">N-glycosylated.</text>
</comment>
<comment type="PTM">
    <text evidence="1">Autolytic cleavage produces the alpha and beta subunits. In cutaneous cells, as well as in certain pathological conditions, shedding of beta-dystroglycan can occur releasing a peptide of about 30 kDa (By similarity).</text>
</comment>
<comment type="PTM">
    <text evidence="1">SRC-mediated phosphorylation of the PPXY motif of the beta subunit recruits SH2 domain-containing proteins, but inhibits binding to WWW domain-containing proteins, DMD and UTRN. This phosphorylation also inhibits nuclear entry (By similarity).</text>
</comment>
<comment type="disruption phenotype">
    <text evidence="10 18">Homozygous null mice embryos exhibit gross developmental abnormalities, beginning around 6.5 days of gestation, in the Reichert's membrane, an extraembryonic basement membrane. In peripheral nerves, ablation of DAG1 from 4 week-old mice causes abnormalities in nerve structure and function including mildly impaired sorting of axons, dysmyelination, axonal loss and aberrant nerve conduction. Laminin-binding is lost and there is disruption of the Schwann cell dystroglycan complex.</text>
</comment>
<sequence length="893" mass="96905">MSVDNWLLHPLWGQTFLLLLSVAVAQAHWPSEPSEAVRDWKNQLEASMHSVLSDFQEAVPTVVGIPDGTAVVGRSFRVSIPTDLIASSGEIIKVSAAGKEALPSWLHWDPHSHILEGLPLDTDKGVHYISVSAARLGANGSHVPQTSSVFSIEVYPEDHNEPQSVRAASSDPGEVVPSACAADEPVTVLTVILDADLTKMTPKQRIDLLNRMQSFSEVELHNMKLVPVVNNRLFDMSAFMAGPGNAKKVVENGALLSWKLGCSLNQNSVPDIRGVETPAREGAMSAQLGYPVVGWHIANKKPTLPKRLRRQIHATPTPVTAIGPPTTAIQEPPSRIVPTPTSPAIAPPTETMAPPVRDPVPGKPTVTIRTRGAIIQTPTLGPIQPTRVSEAGTTVPGQIRPTLTIPGYVEPTAVITPPTTTTKKPRVSTPKPATPSTDSSTTTTRRPTKKPRTPRPVPRVTTKAPITRLETASPPTRIRTTTSGVPRGGEPNQRPELKNHIDRVDAWVGTYFEVKIPSDTFYDNEDTTTDKLKLTLKLREQQLVGEKSWVQFNSNSQLMYGLPDSSHVGKHEYFMHATDKGGLSAVDAFEIHVHKRPQGDKAPARFKARLAGDPAPVVNDIHKKIALVKKLAFAFGDRNCSSITLQNITRGSIVVEWTNNTLPLEPCPKEQIIGLSRRIADENGKPRPAFSNALEPDFKALSIAVTGSGSCRHLQFIPVAPPSPGSSAAPATEVPDRDPEKSSEDDVYLHTVIPAVVVAAILLIAGIIAMICYRKKRKGKLTLEDQATFIKKGVPIIFADELDDSKPPPSSSMPLILQEEKAPLPPPEYPNQSMPETTPLNQDTVGEYTPLRDEDPNAPPYQPPPPFTAPMEGKGSRPKNMTPYRSPPPYVPP</sequence>
<evidence type="ECO:0000250" key="1"/>
<evidence type="ECO:0000250" key="2">
    <source>
        <dbReference type="UniProtKB" id="O18738"/>
    </source>
</evidence>
<evidence type="ECO:0000250" key="3">
    <source>
        <dbReference type="UniProtKB" id="Q14118"/>
    </source>
</evidence>
<evidence type="ECO:0000250" key="4">
    <source>
        <dbReference type="UniProtKB" id="Q28685"/>
    </source>
</evidence>
<evidence type="ECO:0000255" key="5"/>
<evidence type="ECO:0000256" key="6">
    <source>
        <dbReference type="SAM" id="MobiDB-lite"/>
    </source>
</evidence>
<evidence type="ECO:0000269" key="7">
    <source>
    </source>
</evidence>
<evidence type="ECO:0000269" key="8">
    <source>
    </source>
</evidence>
<evidence type="ECO:0000269" key="9">
    <source>
    </source>
</evidence>
<evidence type="ECO:0000269" key="10">
    <source>
    </source>
</evidence>
<evidence type="ECO:0000269" key="11">
    <source>
    </source>
</evidence>
<evidence type="ECO:0000269" key="12">
    <source>
    </source>
</evidence>
<evidence type="ECO:0000269" key="13">
    <source>
    </source>
</evidence>
<evidence type="ECO:0000269" key="14">
    <source>
    </source>
</evidence>
<evidence type="ECO:0000269" key="15">
    <source>
    </source>
</evidence>
<evidence type="ECO:0000269" key="16">
    <source>
    </source>
</evidence>
<evidence type="ECO:0000269" key="17">
    <source>
    </source>
</evidence>
<evidence type="ECO:0000269" key="18">
    <source>
    </source>
</evidence>
<evidence type="ECO:0000269" key="19">
    <source>
    </source>
</evidence>
<evidence type="ECO:0000269" key="20">
    <source>
    </source>
</evidence>
<evidence type="ECO:0000303" key="21">
    <source>
    </source>
</evidence>
<evidence type="ECO:0000305" key="22"/>
<evidence type="ECO:0000312" key="23">
    <source>
        <dbReference type="MGI" id="MGI:101864"/>
    </source>
</evidence>
<evidence type="ECO:0007744" key="24">
    <source>
        <dbReference type="PDB" id="1U2C"/>
    </source>
</evidence>
<evidence type="ECO:0007744" key="25">
    <source>
        <dbReference type="PDB" id="4WIQ"/>
    </source>
</evidence>
<evidence type="ECO:0007744" key="26">
    <source>
        <dbReference type="PDB" id="5N30"/>
    </source>
</evidence>
<evidence type="ECO:0007744" key="27">
    <source>
        <dbReference type="PDB" id="5N4H"/>
    </source>
</evidence>
<evidence type="ECO:0007744" key="28">
    <source>
    </source>
</evidence>
<evidence type="ECO:0007829" key="29">
    <source>
        <dbReference type="PDB" id="4WIQ"/>
    </source>
</evidence>
<name>DAG1_MOUSE</name>
<protein>
    <recommendedName>
        <fullName evidence="23">Dystroglycan 1</fullName>
    </recommendedName>
    <alternativeName>
        <fullName evidence="21">Dystroglycan</fullName>
    </alternativeName>
    <alternativeName>
        <fullName evidence="23">Dystrophin-associated glycoprotein 1</fullName>
    </alternativeName>
    <component>
        <recommendedName>
            <fullName>Alpha-dystroglycan</fullName>
            <shortName>Alpha-DG</shortName>
        </recommendedName>
    </component>
    <component>
        <recommendedName>
            <fullName>Beta-dystroglycan</fullName>
            <shortName>Beta-DG</shortName>
        </recommendedName>
    </component>
</protein>
<organism>
    <name type="scientific">Mus musculus</name>
    <name type="common">Mouse</name>
    <dbReference type="NCBI Taxonomy" id="10090"/>
    <lineage>
        <taxon>Eukaryota</taxon>
        <taxon>Metazoa</taxon>
        <taxon>Chordata</taxon>
        <taxon>Craniata</taxon>
        <taxon>Vertebrata</taxon>
        <taxon>Euteleostomi</taxon>
        <taxon>Mammalia</taxon>
        <taxon>Eutheria</taxon>
        <taxon>Euarchontoglires</taxon>
        <taxon>Glires</taxon>
        <taxon>Rodentia</taxon>
        <taxon>Myomorpha</taxon>
        <taxon>Muroidea</taxon>
        <taxon>Muridae</taxon>
        <taxon>Murinae</taxon>
        <taxon>Mus</taxon>
        <taxon>Mus</taxon>
    </lineage>
</organism>
<dbReference type="EMBL" id="U48854">
    <property type="protein sequence ID" value="AAA99779.2"/>
    <property type="molecule type" value="Genomic_DNA"/>
</dbReference>
<dbReference type="EMBL" id="BC007150">
    <property type="protein sequence ID" value="AAH07150.1"/>
    <property type="molecule type" value="mRNA"/>
</dbReference>
<dbReference type="EMBL" id="X86073">
    <property type="protein sequence ID" value="CAA60031.1"/>
    <property type="molecule type" value="mRNA"/>
</dbReference>
<dbReference type="EMBL" id="Z34532">
    <property type="protein sequence ID" value="CAA84293.1"/>
    <property type="molecule type" value="mRNA"/>
</dbReference>
<dbReference type="EMBL" id="U43512">
    <property type="protein sequence ID" value="AAC52853.1"/>
    <property type="molecule type" value="mRNA"/>
</dbReference>
<dbReference type="CCDS" id="CCDS23518.1"/>
<dbReference type="PIR" id="S59630">
    <property type="entry name" value="S59630"/>
</dbReference>
<dbReference type="RefSeq" id="NP_001263410.1">
    <property type="nucleotide sequence ID" value="NM_001276481.1"/>
</dbReference>
<dbReference type="RefSeq" id="NP_001263411.1">
    <property type="nucleotide sequence ID" value="NM_001276482.1"/>
</dbReference>
<dbReference type="RefSeq" id="NP_001263414.1">
    <property type="nucleotide sequence ID" value="NM_001276485.1"/>
</dbReference>
<dbReference type="RefSeq" id="NP_001263415.1">
    <property type="nucleotide sequence ID" value="NM_001276486.1"/>
</dbReference>
<dbReference type="RefSeq" id="NP_001263421.1">
    <property type="nucleotide sequence ID" value="NM_001276492.1"/>
</dbReference>
<dbReference type="RefSeq" id="NP_001263422.1">
    <property type="nucleotide sequence ID" value="NM_001276493.1"/>
</dbReference>
<dbReference type="RefSeq" id="NP_034147.1">
    <property type="nucleotide sequence ID" value="NM_010017.4"/>
</dbReference>
<dbReference type="RefSeq" id="XP_006511699.1">
    <property type="nucleotide sequence ID" value="XM_006511636.4"/>
</dbReference>
<dbReference type="RefSeq" id="XP_030099900.1">
    <property type="nucleotide sequence ID" value="XM_030244040.2"/>
</dbReference>
<dbReference type="RefSeq" id="XP_030099901.1">
    <property type="nucleotide sequence ID" value="XM_030244041.2"/>
</dbReference>
<dbReference type="PDB" id="1U2C">
    <property type="method" value="X-ray"/>
    <property type="resolution" value="2.30 A"/>
    <property type="chains" value="A=58-303"/>
</dbReference>
<dbReference type="PDB" id="4WIQ">
    <property type="method" value="X-ray"/>
    <property type="resolution" value="1.59 A"/>
    <property type="chains" value="A=50-313"/>
</dbReference>
<dbReference type="PDB" id="5N30">
    <property type="method" value="X-ray"/>
    <property type="resolution" value="1.80 A"/>
    <property type="chains" value="A=50-312"/>
</dbReference>
<dbReference type="PDB" id="5N4H">
    <property type="method" value="X-ray"/>
    <property type="resolution" value="1.70 A"/>
    <property type="chains" value="A=51-313"/>
</dbReference>
<dbReference type="PDB" id="8YT8">
    <property type="method" value="EM"/>
    <property type="resolution" value="3.50 A"/>
    <property type="chains" value="O=492-780"/>
</dbReference>
<dbReference type="PDBsum" id="1U2C"/>
<dbReference type="PDBsum" id="4WIQ"/>
<dbReference type="PDBsum" id="5N30"/>
<dbReference type="PDBsum" id="5N4H"/>
<dbReference type="PDBsum" id="8YT8"/>
<dbReference type="BMRB" id="Q62165"/>
<dbReference type="EMDB" id="EMD-39568"/>
<dbReference type="SMR" id="Q62165"/>
<dbReference type="BioGRID" id="199048">
    <property type="interactions" value="20"/>
</dbReference>
<dbReference type="CORUM" id="Q62165"/>
<dbReference type="FunCoup" id="Q62165">
    <property type="interactions" value="477"/>
</dbReference>
<dbReference type="IntAct" id="Q62165">
    <property type="interactions" value="8"/>
</dbReference>
<dbReference type="MINT" id="Q62165"/>
<dbReference type="STRING" id="10090.ENSMUSP00000142109"/>
<dbReference type="ChEMBL" id="CHEMBL3739252"/>
<dbReference type="MEROPS" id="S72.001"/>
<dbReference type="GlyConnect" id="2270">
    <property type="glycosylation" value="2 N-Linked glycans (2 sites)"/>
</dbReference>
<dbReference type="GlyCosmos" id="Q62165">
    <property type="glycosylation" value="7 sites, 2 glycans"/>
</dbReference>
<dbReference type="GlyGen" id="Q62165">
    <property type="glycosylation" value="10 sites, 6 N-linked glycans (4 sites), 1 O-linked glycan (1 site)"/>
</dbReference>
<dbReference type="iPTMnet" id="Q62165"/>
<dbReference type="PhosphoSitePlus" id="Q62165"/>
<dbReference type="SwissPalm" id="Q62165"/>
<dbReference type="CPTAC" id="non-CPTAC-3909"/>
<dbReference type="jPOST" id="Q62165"/>
<dbReference type="PaxDb" id="10090-ENSMUSP00000130626"/>
<dbReference type="PeptideAtlas" id="Q62165"/>
<dbReference type="ProteomicsDB" id="277942"/>
<dbReference type="Pumba" id="Q62165"/>
<dbReference type="Antibodypedia" id="4283">
    <property type="antibodies" value="375 antibodies from 43 providers"/>
</dbReference>
<dbReference type="DNASU" id="13138"/>
<dbReference type="Ensembl" id="ENSMUST00000080435.9">
    <property type="protein sequence ID" value="ENSMUSP00000079294.3"/>
    <property type="gene ID" value="ENSMUSG00000039952.16"/>
</dbReference>
<dbReference type="Ensembl" id="ENSMUST00000166905.8">
    <property type="protein sequence ID" value="ENSMUSP00000128531.2"/>
    <property type="gene ID" value="ENSMUSG00000039952.16"/>
</dbReference>
<dbReference type="Ensembl" id="ENSMUST00000171412.7">
    <property type="protein sequence ID" value="ENSMUSP00000130626.2"/>
    <property type="gene ID" value="ENSMUSG00000039952.16"/>
</dbReference>
<dbReference type="Ensembl" id="ENSMUST00000191899.6">
    <property type="protein sequence ID" value="ENSMUSP00000142109.2"/>
    <property type="gene ID" value="ENSMUSG00000039952.16"/>
</dbReference>
<dbReference type="GeneID" id="13138"/>
<dbReference type="KEGG" id="mmu:13138"/>
<dbReference type="UCSC" id="uc009rox.2">
    <property type="organism name" value="mouse"/>
</dbReference>
<dbReference type="AGR" id="MGI:101864"/>
<dbReference type="CTD" id="1605"/>
<dbReference type="MGI" id="MGI:101864">
    <property type="gene designation" value="Dag1"/>
</dbReference>
<dbReference type="VEuPathDB" id="HostDB:ENSMUSG00000039952"/>
<dbReference type="eggNOG" id="KOG3781">
    <property type="taxonomic scope" value="Eukaryota"/>
</dbReference>
<dbReference type="GeneTree" id="ENSGT00390000008429"/>
<dbReference type="HOGENOM" id="CLU_007629_2_0_1"/>
<dbReference type="InParanoid" id="Q62165"/>
<dbReference type="OMA" id="WRLGCSL"/>
<dbReference type="OrthoDB" id="5990676at2759"/>
<dbReference type="PhylomeDB" id="Q62165"/>
<dbReference type="TreeFam" id="TF328370"/>
<dbReference type="Reactome" id="R-MMU-5173105">
    <property type="pathway name" value="O-linked glycosylation"/>
</dbReference>
<dbReference type="Reactome" id="R-MMU-9010553">
    <property type="pathway name" value="Regulation of expression of SLITs and ROBOs"/>
</dbReference>
<dbReference type="Reactome" id="R-MMU-9913351">
    <property type="pathway name" value="Formation of the dystrophin-glycoprotein complex (DGC)"/>
</dbReference>
<dbReference type="BioGRID-ORCS" id="13138">
    <property type="hits" value="1 hit in 77 CRISPR screens"/>
</dbReference>
<dbReference type="ChiTaRS" id="Dag1">
    <property type="organism name" value="mouse"/>
</dbReference>
<dbReference type="EvolutionaryTrace" id="Q62165"/>
<dbReference type="PRO" id="PR:Q62165"/>
<dbReference type="Proteomes" id="UP000000589">
    <property type="component" value="Chromosome 9"/>
</dbReference>
<dbReference type="RNAct" id="Q62165">
    <property type="molecule type" value="protein"/>
</dbReference>
<dbReference type="Bgee" id="ENSMUSG00000039952">
    <property type="expression patterns" value="Expressed in sciatic nerve and 284 other cell types or tissues"/>
</dbReference>
<dbReference type="ExpressionAtlas" id="Q62165">
    <property type="expression patterns" value="baseline and differential"/>
</dbReference>
<dbReference type="GO" id="GO:0005912">
    <property type="term" value="C:adherens junction"/>
    <property type="evidence" value="ECO:0007669"/>
    <property type="project" value="Ensembl"/>
</dbReference>
<dbReference type="GO" id="GO:0005604">
    <property type="term" value="C:basement membrane"/>
    <property type="evidence" value="ECO:0000314"/>
    <property type="project" value="MGI"/>
</dbReference>
<dbReference type="GO" id="GO:0016323">
    <property type="term" value="C:basolateral plasma membrane"/>
    <property type="evidence" value="ECO:0007669"/>
    <property type="project" value="Ensembl"/>
</dbReference>
<dbReference type="GO" id="GO:0009986">
    <property type="term" value="C:cell surface"/>
    <property type="evidence" value="ECO:0000314"/>
    <property type="project" value="MGI"/>
</dbReference>
<dbReference type="GO" id="GO:0005911">
    <property type="term" value="C:cell-cell junction"/>
    <property type="evidence" value="ECO:0000314"/>
    <property type="project" value="MGI"/>
</dbReference>
<dbReference type="GO" id="GO:0070938">
    <property type="term" value="C:contractile ring"/>
    <property type="evidence" value="ECO:0007669"/>
    <property type="project" value="Ensembl"/>
</dbReference>
<dbReference type="GO" id="GO:0043034">
    <property type="term" value="C:costamere"/>
    <property type="evidence" value="ECO:0007669"/>
    <property type="project" value="Ensembl"/>
</dbReference>
<dbReference type="GO" id="GO:0005856">
    <property type="term" value="C:cytoskeleton"/>
    <property type="evidence" value="ECO:0007669"/>
    <property type="project" value="UniProtKB-SubCell"/>
</dbReference>
<dbReference type="GO" id="GO:0016011">
    <property type="term" value="C:dystroglycan complex"/>
    <property type="evidence" value="ECO:0000314"/>
    <property type="project" value="MGI"/>
</dbReference>
<dbReference type="GO" id="GO:0009897">
    <property type="term" value="C:external side of plasma membrane"/>
    <property type="evidence" value="ECO:0000314"/>
    <property type="project" value="UniProtKB"/>
</dbReference>
<dbReference type="GO" id="GO:0005576">
    <property type="term" value="C:extracellular region"/>
    <property type="evidence" value="ECO:0000304"/>
    <property type="project" value="Reactome"/>
</dbReference>
<dbReference type="GO" id="GO:0005615">
    <property type="term" value="C:extracellular space"/>
    <property type="evidence" value="ECO:0007005"/>
    <property type="project" value="BHF-UCL"/>
</dbReference>
<dbReference type="GO" id="GO:0030175">
    <property type="term" value="C:filopodium"/>
    <property type="evidence" value="ECO:0007669"/>
    <property type="project" value="Ensembl"/>
</dbReference>
<dbReference type="GO" id="GO:0005925">
    <property type="term" value="C:focal adhesion"/>
    <property type="evidence" value="ECO:0007669"/>
    <property type="project" value="Ensembl"/>
</dbReference>
<dbReference type="GO" id="GO:0098982">
    <property type="term" value="C:GABA-ergic synapse"/>
    <property type="evidence" value="ECO:0000314"/>
    <property type="project" value="SynGO"/>
</dbReference>
<dbReference type="GO" id="GO:0098978">
    <property type="term" value="C:glutamatergic synapse"/>
    <property type="evidence" value="ECO:0007669"/>
    <property type="project" value="Ensembl"/>
</dbReference>
<dbReference type="GO" id="GO:0030027">
    <property type="term" value="C:lamellipodium"/>
    <property type="evidence" value="ECO:0007669"/>
    <property type="project" value="Ensembl"/>
</dbReference>
<dbReference type="GO" id="GO:0016020">
    <property type="term" value="C:membrane"/>
    <property type="evidence" value="ECO:0000314"/>
    <property type="project" value="MGI"/>
</dbReference>
<dbReference type="GO" id="GO:0045121">
    <property type="term" value="C:membrane raft"/>
    <property type="evidence" value="ECO:0000314"/>
    <property type="project" value="MGI"/>
</dbReference>
<dbReference type="GO" id="GO:0033268">
    <property type="term" value="C:node of Ranvier"/>
    <property type="evidence" value="ECO:0000315"/>
    <property type="project" value="UniProtKB"/>
</dbReference>
<dbReference type="GO" id="GO:0034399">
    <property type="term" value="C:nuclear periphery"/>
    <property type="evidence" value="ECO:0007669"/>
    <property type="project" value="Ensembl"/>
</dbReference>
<dbReference type="GO" id="GO:0005654">
    <property type="term" value="C:nucleoplasm"/>
    <property type="evidence" value="ECO:0007669"/>
    <property type="project" value="UniProtKB-SubCell"/>
</dbReference>
<dbReference type="GO" id="GO:0098684">
    <property type="term" value="C:photoreceptor ribbon synapse"/>
    <property type="evidence" value="ECO:0000314"/>
    <property type="project" value="MGI"/>
</dbReference>
<dbReference type="GO" id="GO:0005886">
    <property type="term" value="C:plasma membrane"/>
    <property type="evidence" value="ECO:0000314"/>
    <property type="project" value="MGI"/>
</dbReference>
<dbReference type="GO" id="GO:0044853">
    <property type="term" value="C:plasma membrane raft"/>
    <property type="evidence" value="ECO:0007669"/>
    <property type="project" value="Ensembl"/>
</dbReference>
<dbReference type="GO" id="GO:0098794">
    <property type="term" value="C:postsynapse"/>
    <property type="evidence" value="ECO:0000314"/>
    <property type="project" value="MGI"/>
</dbReference>
<dbReference type="GO" id="GO:0099524">
    <property type="term" value="C:postsynaptic cytosol"/>
    <property type="evidence" value="ECO:0007669"/>
    <property type="project" value="Ensembl"/>
</dbReference>
<dbReference type="GO" id="GO:0045211">
    <property type="term" value="C:postsynaptic membrane"/>
    <property type="evidence" value="ECO:0007669"/>
    <property type="project" value="UniProtKB-SubCell"/>
</dbReference>
<dbReference type="GO" id="GO:0042383">
    <property type="term" value="C:sarcolemma"/>
    <property type="evidence" value="ECO:0000314"/>
    <property type="project" value="MGI"/>
</dbReference>
<dbReference type="GO" id="GO:0003779">
    <property type="term" value="F:actin binding"/>
    <property type="evidence" value="ECO:0007669"/>
    <property type="project" value="Ensembl"/>
</dbReference>
<dbReference type="GO" id="GO:0051393">
    <property type="term" value="F:alpha-actinin binding"/>
    <property type="evidence" value="ECO:0007669"/>
    <property type="project" value="Ensembl"/>
</dbReference>
<dbReference type="GO" id="GO:0005509">
    <property type="term" value="F:calcium ion binding"/>
    <property type="evidence" value="ECO:0007669"/>
    <property type="project" value="InterPro"/>
</dbReference>
<dbReference type="GO" id="GO:0002162">
    <property type="term" value="F:dystroglycan binding"/>
    <property type="evidence" value="ECO:0000353"/>
    <property type="project" value="CAFA"/>
</dbReference>
<dbReference type="GO" id="GO:0043236">
    <property type="term" value="F:laminin binding"/>
    <property type="evidence" value="ECO:0000314"/>
    <property type="project" value="MGI"/>
</dbReference>
<dbReference type="GO" id="GO:0043237">
    <property type="term" value="F:laminin-1 binding"/>
    <property type="evidence" value="ECO:0007669"/>
    <property type="project" value="Ensembl"/>
</dbReference>
<dbReference type="GO" id="GO:0044877">
    <property type="term" value="F:protein-containing complex binding"/>
    <property type="evidence" value="ECO:0000314"/>
    <property type="project" value="MGI"/>
</dbReference>
<dbReference type="GO" id="GO:0042169">
    <property type="term" value="F:SH2 domain binding"/>
    <property type="evidence" value="ECO:0007669"/>
    <property type="project" value="Ensembl"/>
</dbReference>
<dbReference type="GO" id="GO:0008307">
    <property type="term" value="F:structural constituent of muscle"/>
    <property type="evidence" value="ECO:0007669"/>
    <property type="project" value="Ensembl"/>
</dbReference>
<dbReference type="GO" id="GO:0015631">
    <property type="term" value="F:tubulin binding"/>
    <property type="evidence" value="ECO:0007669"/>
    <property type="project" value="Ensembl"/>
</dbReference>
<dbReference type="GO" id="GO:0017166">
    <property type="term" value="F:vinculin binding"/>
    <property type="evidence" value="ECO:0007669"/>
    <property type="project" value="Ensembl"/>
</dbReference>
<dbReference type="GO" id="GO:0001618">
    <property type="term" value="F:virus receptor activity"/>
    <property type="evidence" value="ECO:0007669"/>
    <property type="project" value="Ensembl"/>
</dbReference>
<dbReference type="GO" id="GO:0060055">
    <property type="term" value="P:angiogenesis involved in wound healing"/>
    <property type="evidence" value="ECO:0007669"/>
    <property type="project" value="Ensembl"/>
</dbReference>
<dbReference type="GO" id="GO:0031103">
    <property type="term" value="P:axon regeneration"/>
    <property type="evidence" value="ECO:0007669"/>
    <property type="project" value="Ensembl"/>
</dbReference>
<dbReference type="GO" id="GO:0071711">
    <property type="term" value="P:basement membrane organization"/>
    <property type="evidence" value="ECO:0000315"/>
    <property type="project" value="MGI"/>
</dbReference>
<dbReference type="GO" id="GO:0060445">
    <property type="term" value="P:branching involved in salivary gland morphogenesis"/>
    <property type="evidence" value="ECO:0000315"/>
    <property type="project" value="MGI"/>
</dbReference>
<dbReference type="GO" id="GO:0016340">
    <property type="term" value="P:calcium-dependent cell-matrix adhesion"/>
    <property type="evidence" value="ECO:0007669"/>
    <property type="project" value="Ensembl"/>
</dbReference>
<dbReference type="GO" id="GO:0071397">
    <property type="term" value="P:cellular response to cholesterol"/>
    <property type="evidence" value="ECO:0007669"/>
    <property type="project" value="Ensembl"/>
</dbReference>
<dbReference type="GO" id="GO:0071260">
    <property type="term" value="P:cellular response to mechanical stimulus"/>
    <property type="evidence" value="ECO:0007669"/>
    <property type="project" value="Ensembl"/>
</dbReference>
<dbReference type="GO" id="GO:0071679">
    <property type="term" value="P:commissural neuron axon guidance"/>
    <property type="evidence" value="ECO:0000315"/>
    <property type="project" value="MGI"/>
</dbReference>
<dbReference type="GO" id="GO:0060441">
    <property type="term" value="P:epithelial tube branching involved in lung morphogenesis"/>
    <property type="evidence" value="ECO:0000315"/>
    <property type="project" value="MGI"/>
</dbReference>
<dbReference type="GO" id="GO:0007507">
    <property type="term" value="P:heart development"/>
    <property type="evidence" value="ECO:0000315"/>
    <property type="project" value="MGI"/>
</dbReference>
<dbReference type="GO" id="GO:0003007">
    <property type="term" value="P:heart morphogenesis"/>
    <property type="evidence" value="ECO:0000315"/>
    <property type="project" value="MGI"/>
</dbReference>
<dbReference type="GO" id="GO:0006509">
    <property type="term" value="P:membrane protein ectodomain proteolysis"/>
    <property type="evidence" value="ECO:0007669"/>
    <property type="project" value="Ensembl"/>
</dbReference>
<dbReference type="GO" id="GO:0034453">
    <property type="term" value="P:microtubule anchoring"/>
    <property type="evidence" value="ECO:0007669"/>
    <property type="project" value="Ensembl"/>
</dbReference>
<dbReference type="GO" id="GO:0002011">
    <property type="term" value="P:morphogenesis of an epithelial sheet"/>
    <property type="evidence" value="ECO:0000315"/>
    <property type="project" value="MGI"/>
</dbReference>
<dbReference type="GO" id="GO:0022011">
    <property type="term" value="P:myelination in peripheral nervous system"/>
    <property type="evidence" value="ECO:0000315"/>
    <property type="project" value="UniProtKB"/>
</dbReference>
<dbReference type="GO" id="GO:0030336">
    <property type="term" value="P:negative regulation of cell migration"/>
    <property type="evidence" value="ECO:0007669"/>
    <property type="project" value="Ensembl"/>
</dbReference>
<dbReference type="GO" id="GO:0043409">
    <property type="term" value="P:negative regulation of MAPK cascade"/>
    <property type="evidence" value="ECO:0007669"/>
    <property type="project" value="Ensembl"/>
</dbReference>
<dbReference type="GO" id="GO:0051898">
    <property type="term" value="P:negative regulation of phosphatidylinositol 3-kinase/protein kinase B signal transduction"/>
    <property type="evidence" value="ECO:0007669"/>
    <property type="project" value="Ensembl"/>
</dbReference>
<dbReference type="GO" id="GO:0021682">
    <property type="term" value="P:nerve maturation"/>
    <property type="evidence" value="ECO:0000315"/>
    <property type="project" value="UniProtKB"/>
</dbReference>
<dbReference type="GO" id="GO:0001954">
    <property type="term" value="P:positive regulation of cell-matrix adhesion"/>
    <property type="evidence" value="ECO:0007669"/>
    <property type="project" value="Ensembl"/>
</dbReference>
<dbReference type="GO" id="GO:0031643">
    <property type="term" value="P:positive regulation of myelination"/>
    <property type="evidence" value="ECO:0007669"/>
    <property type="project" value="Ensembl"/>
</dbReference>
<dbReference type="GO" id="GO:0048714">
    <property type="term" value="P:positive regulation of oligodendrocyte differentiation"/>
    <property type="evidence" value="ECO:0007669"/>
    <property type="project" value="Ensembl"/>
</dbReference>
<dbReference type="GO" id="GO:0015031">
    <property type="term" value="P:protein transport"/>
    <property type="evidence" value="ECO:0000314"/>
    <property type="project" value="MGI"/>
</dbReference>
<dbReference type="GO" id="GO:0098696">
    <property type="term" value="P:regulation of neurotransmitter receptor localization to postsynaptic specialization membrane"/>
    <property type="evidence" value="ECO:0000314"/>
    <property type="project" value="SynGO"/>
</dbReference>
<dbReference type="GO" id="GO:0050807">
    <property type="term" value="P:regulation of synapse organization"/>
    <property type="evidence" value="ECO:0000314"/>
    <property type="project" value="SynGO"/>
</dbReference>
<dbReference type="GO" id="GO:0048167">
    <property type="term" value="P:regulation of synaptic plasticity"/>
    <property type="evidence" value="ECO:0000315"/>
    <property type="project" value="MGI"/>
</dbReference>
<dbReference type="GO" id="GO:0014894">
    <property type="term" value="P:response to denervation involved in regulation of muscle adaptation"/>
    <property type="evidence" value="ECO:0007669"/>
    <property type="project" value="Ensembl"/>
</dbReference>
<dbReference type="GO" id="GO:0014850">
    <property type="term" value="P:response to muscle activity"/>
    <property type="evidence" value="ECO:0000314"/>
    <property type="project" value="MGI"/>
</dbReference>
<dbReference type="GO" id="GO:0043434">
    <property type="term" value="P:response to peptide hormone"/>
    <property type="evidence" value="ECO:0007669"/>
    <property type="project" value="Ensembl"/>
</dbReference>
<dbReference type="GO" id="GO:0098942">
    <property type="term" value="P:retrograde trans-synaptic signaling by trans-synaptic protein complex"/>
    <property type="evidence" value="ECO:0000314"/>
    <property type="project" value="SynGO"/>
</dbReference>
<dbReference type="GO" id="GO:0014044">
    <property type="term" value="P:Schwann cell development"/>
    <property type="evidence" value="ECO:0000315"/>
    <property type="project" value="UniProtKB"/>
</dbReference>
<dbReference type="GO" id="GO:0043403">
    <property type="term" value="P:skeletal muscle tissue regeneration"/>
    <property type="evidence" value="ECO:0007669"/>
    <property type="project" value="Ensembl"/>
</dbReference>
<dbReference type="CDD" id="cd11305">
    <property type="entry name" value="alpha_DG_C"/>
    <property type="match status" value="1"/>
</dbReference>
<dbReference type="CDD" id="cd11303">
    <property type="entry name" value="Dystroglycan_repeat"/>
    <property type="match status" value="2"/>
</dbReference>
<dbReference type="DisProt" id="DP00491"/>
<dbReference type="FunFam" id="2.60.40.10:FF:000555">
    <property type="entry name" value="Dystroglycan 1"/>
    <property type="match status" value="1"/>
</dbReference>
<dbReference type="FunFam" id="2.60.40.10:FF:000684">
    <property type="entry name" value="Dystroglycan 1"/>
    <property type="match status" value="1"/>
</dbReference>
<dbReference type="FunFam" id="3.30.70.1040:FF:000001">
    <property type="entry name" value="Dystroglycan 1"/>
    <property type="match status" value="1"/>
</dbReference>
<dbReference type="Gene3D" id="3.30.70.1040">
    <property type="entry name" value="Dystroglycan, domain 2"/>
    <property type="match status" value="1"/>
</dbReference>
<dbReference type="Gene3D" id="2.60.40.10">
    <property type="entry name" value="Immunoglobulins"/>
    <property type="match status" value="2"/>
</dbReference>
<dbReference type="InterPro" id="IPR027468">
    <property type="entry name" value="Alpha-dystroglycan_domain_2"/>
</dbReference>
<dbReference type="InterPro" id="IPR041631">
    <property type="entry name" value="Alpha_DG1_N2"/>
</dbReference>
<dbReference type="InterPro" id="IPR006644">
    <property type="entry name" value="Cadg"/>
</dbReference>
<dbReference type="InterPro" id="IPR015919">
    <property type="entry name" value="Cadherin-like_sf"/>
</dbReference>
<dbReference type="InterPro" id="IPR008465">
    <property type="entry name" value="DAG1_C"/>
</dbReference>
<dbReference type="InterPro" id="IPR013783">
    <property type="entry name" value="Ig-like_fold"/>
</dbReference>
<dbReference type="InterPro" id="IPR030398">
    <property type="entry name" value="SEA_DG_dom"/>
</dbReference>
<dbReference type="PANTHER" id="PTHR21559:SF22">
    <property type="entry name" value="DYSTROGLYCAN 1"/>
    <property type="match status" value="1"/>
</dbReference>
<dbReference type="PANTHER" id="PTHR21559">
    <property type="entry name" value="DYSTROGLYCAN-RELATED"/>
    <property type="match status" value="1"/>
</dbReference>
<dbReference type="Pfam" id="PF18424">
    <property type="entry name" value="a_DG1_N2"/>
    <property type="match status" value="1"/>
</dbReference>
<dbReference type="Pfam" id="PF05454">
    <property type="entry name" value="DAG1"/>
    <property type="match status" value="1"/>
</dbReference>
<dbReference type="Pfam" id="PF05345">
    <property type="entry name" value="He_PIG"/>
    <property type="match status" value="1"/>
</dbReference>
<dbReference type="SMART" id="SM00736">
    <property type="entry name" value="CADG"/>
    <property type="match status" value="2"/>
</dbReference>
<dbReference type="SUPFAM" id="SSF49313">
    <property type="entry name" value="Cadherin-like"/>
    <property type="match status" value="2"/>
</dbReference>
<dbReference type="SUPFAM" id="SSF111006">
    <property type="entry name" value="Dystroglycan, domain 2"/>
    <property type="match status" value="1"/>
</dbReference>
<dbReference type="PROSITE" id="PS51699">
    <property type="entry name" value="SEA_DG"/>
    <property type="match status" value="1"/>
</dbReference>